<proteinExistence type="predicted"/>
<sequence length="92" mass="10318">MCSFEHGGWYVPKTVLSLLRRRKCQDARAESEELGITGICQNYAVPVQLGVQHYFGAHWGIDATATVSFGVDTKLAKFRIPYTLRVGPVFRT</sequence>
<protein>
    <recommendedName>
        <fullName>Uncharacterized protein TP_0617</fullName>
    </recommendedName>
</protein>
<dbReference type="EMBL" id="AE000520">
    <property type="protein sequence ID" value="AAC65593.1"/>
    <property type="molecule type" value="Genomic_DNA"/>
</dbReference>
<dbReference type="PIR" id="F71303">
    <property type="entry name" value="F71303"/>
</dbReference>
<dbReference type="IntAct" id="O83626">
    <property type="interactions" value="1"/>
</dbReference>
<dbReference type="STRING" id="243276.TP_0617"/>
<dbReference type="EnsemblBacteria" id="AAC65593">
    <property type="protein sequence ID" value="AAC65593"/>
    <property type="gene ID" value="TP_0617"/>
</dbReference>
<dbReference type="KEGG" id="tpa:TP_0617"/>
<dbReference type="KEGG" id="tpw:TPANIC_0617"/>
<dbReference type="HOGENOM" id="CLU_2439913_0_0_12"/>
<dbReference type="Proteomes" id="UP000000811">
    <property type="component" value="Chromosome"/>
</dbReference>
<dbReference type="InterPro" id="IPR024471">
    <property type="entry name" value="DUF2715"/>
</dbReference>
<dbReference type="Pfam" id="PF10895">
    <property type="entry name" value="DUF2715"/>
    <property type="match status" value="1"/>
</dbReference>
<feature type="chain" id="PRO_0000202288" description="Uncharacterized protein TP_0617">
    <location>
        <begin position="1"/>
        <end position="92"/>
    </location>
</feature>
<organism>
    <name type="scientific">Treponema pallidum (strain Nichols)</name>
    <dbReference type="NCBI Taxonomy" id="243276"/>
    <lineage>
        <taxon>Bacteria</taxon>
        <taxon>Pseudomonadati</taxon>
        <taxon>Spirochaetota</taxon>
        <taxon>Spirochaetia</taxon>
        <taxon>Spirochaetales</taxon>
        <taxon>Treponemataceae</taxon>
        <taxon>Treponema</taxon>
    </lineage>
</organism>
<gene>
    <name type="ordered locus">TP_0617</name>
</gene>
<keyword id="KW-1185">Reference proteome</keyword>
<accession>O83626</accession>
<reference key="1">
    <citation type="journal article" date="1998" name="Science">
        <title>Complete genome sequence of Treponema pallidum, the syphilis spirochete.</title>
        <authorList>
            <person name="Fraser C.M."/>
            <person name="Norris S.J."/>
            <person name="Weinstock G.M."/>
            <person name="White O."/>
            <person name="Sutton G.G."/>
            <person name="Dodson R.J."/>
            <person name="Gwinn M.L."/>
            <person name="Hickey E.K."/>
            <person name="Clayton R.A."/>
            <person name="Ketchum K.A."/>
            <person name="Sodergren E."/>
            <person name="Hardham J.M."/>
            <person name="McLeod M.P."/>
            <person name="Salzberg S.L."/>
            <person name="Peterson J.D."/>
            <person name="Khalak H.G."/>
            <person name="Richardson D.L."/>
            <person name="Howell J.K."/>
            <person name="Chidambaram M."/>
            <person name="Utterback T.R."/>
            <person name="McDonald L.A."/>
            <person name="Artiach P."/>
            <person name="Bowman C."/>
            <person name="Cotton M.D."/>
            <person name="Fujii C."/>
            <person name="Garland S.A."/>
            <person name="Hatch B."/>
            <person name="Horst K."/>
            <person name="Roberts K.M."/>
            <person name="Sandusky M."/>
            <person name="Weidman J.F."/>
            <person name="Smith H.O."/>
            <person name="Venter J.C."/>
        </authorList>
    </citation>
    <scope>NUCLEOTIDE SEQUENCE [LARGE SCALE GENOMIC DNA]</scope>
    <source>
        <strain>Nichols</strain>
    </source>
</reference>
<name>Y617_TREPA</name>